<proteinExistence type="evidence at protein level"/>
<dbReference type="EMBL" id="BC168678">
    <property type="protein sequence ID" value="AAI68678.1"/>
    <property type="molecule type" value="mRNA"/>
</dbReference>
<dbReference type="RefSeq" id="NP_001094276.1">
    <property type="nucleotide sequence ID" value="NM_001100806.1"/>
</dbReference>
<dbReference type="SMR" id="P85845"/>
<dbReference type="BioGRID" id="598682">
    <property type="interactions" value="3"/>
</dbReference>
<dbReference type="FunCoup" id="P85845">
    <property type="interactions" value="1526"/>
</dbReference>
<dbReference type="IntAct" id="P85845">
    <property type="interactions" value="4"/>
</dbReference>
<dbReference type="MINT" id="P85845"/>
<dbReference type="STRING" id="10116.ENSRNOP00000075451"/>
<dbReference type="GlyGen" id="P85845">
    <property type="glycosylation" value="1 site, 1 O-linked glycan (1 site)"/>
</dbReference>
<dbReference type="iPTMnet" id="P85845"/>
<dbReference type="PhosphoSitePlus" id="P85845"/>
<dbReference type="jPOST" id="P85845"/>
<dbReference type="GeneID" id="683788"/>
<dbReference type="KEGG" id="rno:683788"/>
<dbReference type="AGR" id="RGD:1583309"/>
<dbReference type="CTD" id="6624"/>
<dbReference type="RGD" id="1583309">
    <property type="gene designation" value="Fscn1"/>
</dbReference>
<dbReference type="InParanoid" id="P85845"/>
<dbReference type="PhylomeDB" id="P85845"/>
<dbReference type="PRO" id="PR:P85845"/>
<dbReference type="Proteomes" id="UP000002494">
    <property type="component" value="Unplaced"/>
</dbReference>
<dbReference type="GO" id="GO:0015629">
    <property type="term" value="C:actin cytoskeleton"/>
    <property type="evidence" value="ECO:0000266"/>
    <property type="project" value="RGD"/>
</dbReference>
<dbReference type="GO" id="GO:0005938">
    <property type="term" value="C:cell cortex"/>
    <property type="evidence" value="ECO:0007669"/>
    <property type="project" value="UniProtKB-SubCell"/>
</dbReference>
<dbReference type="GO" id="GO:0031253">
    <property type="term" value="C:cell projection membrane"/>
    <property type="evidence" value="ECO:0000250"/>
    <property type="project" value="UniProtKB"/>
</dbReference>
<dbReference type="GO" id="GO:0005911">
    <property type="term" value="C:cell-cell junction"/>
    <property type="evidence" value="ECO:0000250"/>
    <property type="project" value="UniProtKB"/>
</dbReference>
<dbReference type="GO" id="GO:0005737">
    <property type="term" value="C:cytoplasm"/>
    <property type="evidence" value="ECO:0000266"/>
    <property type="project" value="RGD"/>
</dbReference>
<dbReference type="GO" id="GO:0005856">
    <property type="term" value="C:cytoskeleton"/>
    <property type="evidence" value="ECO:0000266"/>
    <property type="project" value="RGD"/>
</dbReference>
<dbReference type="GO" id="GO:0005829">
    <property type="term" value="C:cytosol"/>
    <property type="evidence" value="ECO:0007669"/>
    <property type="project" value="UniProtKB-SubCell"/>
</dbReference>
<dbReference type="GO" id="GO:0030425">
    <property type="term" value="C:dendrite"/>
    <property type="evidence" value="ECO:0000314"/>
    <property type="project" value="RGD"/>
</dbReference>
<dbReference type="GO" id="GO:0030175">
    <property type="term" value="C:filopodium"/>
    <property type="evidence" value="ECO:0000314"/>
    <property type="project" value="RGD"/>
</dbReference>
<dbReference type="GO" id="GO:0030426">
    <property type="term" value="C:growth cone"/>
    <property type="evidence" value="ECO:0000314"/>
    <property type="project" value="RGD"/>
</dbReference>
<dbReference type="GO" id="GO:0030027">
    <property type="term" value="C:lamellipodium"/>
    <property type="evidence" value="ECO:0000314"/>
    <property type="project" value="RGD"/>
</dbReference>
<dbReference type="GO" id="GO:0044393">
    <property type="term" value="C:microspike"/>
    <property type="evidence" value="ECO:0000250"/>
    <property type="project" value="UniProtKB"/>
</dbReference>
<dbReference type="GO" id="GO:0005902">
    <property type="term" value="C:microvillus"/>
    <property type="evidence" value="ECO:0000314"/>
    <property type="project" value="RGD"/>
</dbReference>
<dbReference type="GO" id="GO:0002102">
    <property type="term" value="C:podosome"/>
    <property type="evidence" value="ECO:0000250"/>
    <property type="project" value="UniProtKB"/>
</dbReference>
<dbReference type="GO" id="GO:0001726">
    <property type="term" value="C:ruffle"/>
    <property type="evidence" value="ECO:0000314"/>
    <property type="project" value="RGD"/>
</dbReference>
<dbReference type="GO" id="GO:0001725">
    <property type="term" value="C:stress fiber"/>
    <property type="evidence" value="ECO:0000314"/>
    <property type="project" value="RGD"/>
</dbReference>
<dbReference type="GO" id="GO:0003779">
    <property type="term" value="F:actin binding"/>
    <property type="evidence" value="ECO:0000314"/>
    <property type="project" value="RGD"/>
</dbReference>
<dbReference type="GO" id="GO:0051015">
    <property type="term" value="F:actin filament binding"/>
    <property type="evidence" value="ECO:0000266"/>
    <property type="project" value="RGD"/>
</dbReference>
<dbReference type="GO" id="GO:0030674">
    <property type="term" value="F:protein-macromolecule adaptor activity"/>
    <property type="evidence" value="ECO:0007669"/>
    <property type="project" value="InterPro"/>
</dbReference>
<dbReference type="GO" id="GO:0030036">
    <property type="term" value="P:actin cytoskeleton organization"/>
    <property type="evidence" value="ECO:0000266"/>
    <property type="project" value="RGD"/>
</dbReference>
<dbReference type="GO" id="GO:0051017">
    <property type="term" value="P:actin filament bundle assembly"/>
    <property type="evidence" value="ECO:0000314"/>
    <property type="project" value="UniProtKB"/>
</dbReference>
<dbReference type="GO" id="GO:0016477">
    <property type="term" value="P:cell migration"/>
    <property type="evidence" value="ECO:0000266"/>
    <property type="project" value="RGD"/>
</dbReference>
<dbReference type="GO" id="GO:0048870">
    <property type="term" value="P:cell motility"/>
    <property type="evidence" value="ECO:0000250"/>
    <property type="project" value="UniProtKB"/>
</dbReference>
<dbReference type="GO" id="GO:0007043">
    <property type="term" value="P:cell-cell junction assembly"/>
    <property type="evidence" value="ECO:0000250"/>
    <property type="project" value="UniProtKB"/>
</dbReference>
<dbReference type="GO" id="GO:0071460">
    <property type="term" value="P:cellular response to cell-matrix adhesion"/>
    <property type="evidence" value="ECO:0000270"/>
    <property type="project" value="RGD"/>
</dbReference>
<dbReference type="GO" id="GO:0035089">
    <property type="term" value="P:establishment of apical/basal cell polarity"/>
    <property type="evidence" value="ECO:0000250"/>
    <property type="project" value="UniProtKB"/>
</dbReference>
<dbReference type="GO" id="GO:0007163">
    <property type="term" value="P:establishment or maintenance of cell polarity"/>
    <property type="evidence" value="ECO:0000318"/>
    <property type="project" value="GO_Central"/>
</dbReference>
<dbReference type="GO" id="GO:0001889">
    <property type="term" value="P:liver development"/>
    <property type="evidence" value="ECO:0000270"/>
    <property type="project" value="RGD"/>
</dbReference>
<dbReference type="GO" id="GO:0030035">
    <property type="term" value="P:microspike assembly"/>
    <property type="evidence" value="ECO:0000250"/>
    <property type="project" value="UniProtKB"/>
</dbReference>
<dbReference type="GO" id="GO:0030046">
    <property type="term" value="P:parallel actin filament bundle assembly"/>
    <property type="evidence" value="ECO:0000266"/>
    <property type="project" value="RGD"/>
</dbReference>
<dbReference type="GO" id="GO:0090091">
    <property type="term" value="P:positive regulation of extracellular matrix disassembly"/>
    <property type="evidence" value="ECO:0000250"/>
    <property type="project" value="UniProtKB"/>
</dbReference>
<dbReference type="GO" id="GO:0051491">
    <property type="term" value="P:positive regulation of filopodium assembly"/>
    <property type="evidence" value="ECO:0000250"/>
    <property type="project" value="UniProtKB"/>
</dbReference>
<dbReference type="GO" id="GO:0010592">
    <property type="term" value="P:positive regulation of lamellipodium assembly"/>
    <property type="evidence" value="ECO:0000250"/>
    <property type="project" value="UniProtKB"/>
</dbReference>
<dbReference type="GO" id="GO:0071803">
    <property type="term" value="P:positive regulation of podosome assembly"/>
    <property type="evidence" value="ECO:0000250"/>
    <property type="project" value="UniProtKB"/>
</dbReference>
<dbReference type="GO" id="GO:0032956">
    <property type="term" value="P:regulation of actin cytoskeleton organization"/>
    <property type="evidence" value="ECO:0000250"/>
    <property type="project" value="UniProtKB"/>
</dbReference>
<dbReference type="GO" id="GO:0032534">
    <property type="term" value="P:regulation of microvillus assembly"/>
    <property type="evidence" value="ECO:0000250"/>
    <property type="project" value="UniProtKB"/>
</dbReference>
<dbReference type="CDD" id="cd23344">
    <property type="entry name" value="beta-trefoil_FSCN1_rpt1"/>
    <property type="match status" value="1"/>
</dbReference>
<dbReference type="CDD" id="cd23348">
    <property type="entry name" value="beta-trefoil_FSCN1_rpt2"/>
    <property type="match status" value="1"/>
</dbReference>
<dbReference type="CDD" id="cd23352">
    <property type="entry name" value="beta-trefoil_FSCN1_rpt3"/>
    <property type="match status" value="1"/>
</dbReference>
<dbReference type="FunFam" id="2.80.10.50:FF:000008">
    <property type="entry name" value="Fascin"/>
    <property type="match status" value="1"/>
</dbReference>
<dbReference type="FunFam" id="2.80.10.50:FF:000010">
    <property type="entry name" value="Fascin"/>
    <property type="match status" value="1"/>
</dbReference>
<dbReference type="FunFam" id="2.80.10.50:FF:000015">
    <property type="entry name" value="Fascin"/>
    <property type="match status" value="1"/>
</dbReference>
<dbReference type="FunFam" id="2.80.10.50:FF:000030">
    <property type="entry name" value="Fascin"/>
    <property type="match status" value="1"/>
</dbReference>
<dbReference type="Gene3D" id="2.80.10.50">
    <property type="match status" value="4"/>
</dbReference>
<dbReference type="InterPro" id="IPR008999">
    <property type="entry name" value="Actin-crosslinking"/>
</dbReference>
<dbReference type="InterPro" id="IPR010431">
    <property type="entry name" value="Fascin"/>
</dbReference>
<dbReference type="InterPro" id="IPR022768">
    <property type="entry name" value="Fascin-like_dom"/>
</dbReference>
<dbReference type="InterPro" id="IPR024703">
    <property type="entry name" value="Fascin_metazoans"/>
</dbReference>
<dbReference type="PANTHER" id="PTHR10551">
    <property type="entry name" value="FASCIN"/>
    <property type="match status" value="1"/>
</dbReference>
<dbReference type="PANTHER" id="PTHR10551:SF23">
    <property type="entry name" value="FASCIN"/>
    <property type="match status" value="1"/>
</dbReference>
<dbReference type="Pfam" id="PF06268">
    <property type="entry name" value="Fascin"/>
    <property type="match status" value="4"/>
</dbReference>
<dbReference type="PIRSF" id="PIRSF005682">
    <property type="entry name" value="Fascin"/>
    <property type="match status" value="1"/>
</dbReference>
<dbReference type="SUPFAM" id="SSF50405">
    <property type="entry name" value="Actin-crosslinking proteins"/>
    <property type="match status" value="4"/>
</dbReference>
<keyword id="KW-0007">Acetylation</keyword>
<keyword id="KW-0009">Actin-binding</keyword>
<keyword id="KW-0965">Cell junction</keyword>
<keyword id="KW-0966">Cell projection</keyword>
<keyword id="KW-0963">Cytoplasm</keyword>
<keyword id="KW-0206">Cytoskeleton</keyword>
<keyword id="KW-1017">Isopeptide bond</keyword>
<keyword id="KW-0597">Phosphoprotein</keyword>
<keyword id="KW-1185">Reference proteome</keyword>
<keyword id="KW-0832">Ubl conjugation</keyword>
<protein>
    <recommendedName>
        <fullName>Fascin</fullName>
    </recommendedName>
</protein>
<organism>
    <name type="scientific">Rattus norvegicus</name>
    <name type="common">Rat</name>
    <dbReference type="NCBI Taxonomy" id="10116"/>
    <lineage>
        <taxon>Eukaryota</taxon>
        <taxon>Metazoa</taxon>
        <taxon>Chordata</taxon>
        <taxon>Craniata</taxon>
        <taxon>Vertebrata</taxon>
        <taxon>Euteleostomi</taxon>
        <taxon>Mammalia</taxon>
        <taxon>Eutheria</taxon>
        <taxon>Euarchontoglires</taxon>
        <taxon>Glires</taxon>
        <taxon>Rodentia</taxon>
        <taxon>Myomorpha</taxon>
        <taxon>Muroidea</taxon>
        <taxon>Muridae</taxon>
        <taxon>Murinae</taxon>
        <taxon>Rattus</taxon>
    </lineage>
</organism>
<reference key="1">
    <citation type="journal article" date="2004" name="Genome Res.">
        <title>The status, quality, and expansion of the NIH full-length cDNA project: the Mammalian Gene Collection (MGC).</title>
        <authorList>
            <consortium name="The MGC Project Team"/>
        </authorList>
    </citation>
    <scope>NUCLEOTIDE SEQUENCE [LARGE SCALE MRNA]</scope>
    <source>
        <tissue>Prostate</tissue>
    </source>
</reference>
<reference key="2">
    <citation type="journal article" date="1996" name="J. Neurochem.">
        <title>Inhibition by drebrin of the actin-bundling activity of brain fascin, a protein localized in filopodia of growth cones.</title>
        <authorList>
            <person name="Sasaki Y."/>
            <person name="Hayashi K."/>
            <person name="Shirao T."/>
            <person name="Ishikawa R."/>
            <person name="Kohama K."/>
        </authorList>
    </citation>
    <scope>FUNCTION</scope>
    <scope>SUBCELLULAR LOCATION</scope>
    <scope>ACTIN-BINDING</scope>
    <scope>TISSUE SPECIFICITY</scope>
</reference>
<reference key="3">
    <citation type="journal article" date="2009" name="Proteomics">
        <title>Proteome profile of the mature rat olfactory bulb.</title>
        <authorList>
            <person name="Maurya D.K."/>
            <person name="Sundaram C.S."/>
            <person name="Bhargava P."/>
        </authorList>
    </citation>
    <scope>IDENTIFICATION BY MASS SPECTROMETRY</scope>
    <scope>SUBCELLULAR LOCATION</scope>
</reference>
<reference key="4">
    <citation type="journal article" date="2011" name="Sci. Signal.">
        <title>Neuronal growth cone retraction relies on proneurotrophin receptor signaling through Rac.</title>
        <authorList>
            <person name="Deinhardt K."/>
            <person name="Kim T."/>
            <person name="Spellman D.S."/>
            <person name="Mains R.E."/>
            <person name="Eipper B.A."/>
            <person name="Neubert T.A."/>
            <person name="Chao M.V."/>
            <person name="Hempstead B.L."/>
        </authorList>
    </citation>
    <scope>FUNCTION</scope>
    <scope>INTERACTION WITH NGFR</scope>
    <scope>TISSUE SPECIFICITY</scope>
    <scope>MUTAGENESIS OF</scope>
    <scope>PHOSPHORYLATION AT</scope>
</reference>
<reference key="5">
    <citation type="journal article" date="2012" name="Nat. Commun.">
        <title>Quantitative maps of protein phosphorylation sites across 14 different rat organs and tissues.</title>
        <authorList>
            <person name="Lundby A."/>
            <person name="Secher A."/>
            <person name="Lage K."/>
            <person name="Nordsborg N.B."/>
            <person name="Dmytriyev A."/>
            <person name="Lundby C."/>
            <person name="Olsen J.V."/>
        </authorList>
    </citation>
    <scope>PHOSPHORYLATION [LARGE SCALE ANALYSIS] AT THR-403</scope>
    <scope>IDENTIFICATION BY MASS SPECTROMETRY [LARGE SCALE ANALYSIS]</scope>
</reference>
<sequence>MTANGTAEAVQIQFGLISCGNKYLTAEAFGFKVNASASSLKKKQIWTLEQPPDEAGSAAVCLRSHLGPYLAADKDGNVTCEREVPDGDCRFLVVAHDDGRWSLQSEAHRRYFGGTEDRLSCFAQSVSPAEKWSVHIAMHPQVNIYSVTRKRYAHLSARPADEIAVDRDVPWGVDSLITLAFQDQRYSVQTSDHRFLRHDGRLVARPEPATGFTLEFRSGKVAFRDCEGRYLAPSGPSGTLKAGKATKVGKDELFALEQSCAQVVLQAANERNVSTRQGMDLSANQDEETDQETFQLEIDRDTRKCAFRTHTGKYWTLTATGGVQSTASTKNASCYFDIEWCERRITLRASNGKFVTAKKNGQLAATVETAGDSELFLMKLINRPIIVFRGEHGFIGCRKVTGTLDANRSSYDVFQLEFNDGAYNIKDSTGKYWTVGSDSSVTSSSDTPVDFFLEFCDYNKVALKVGGRYLKGDHAGVLKACAETIDPATLWEY</sequence>
<feature type="initiator methionine" description="Removed" evidence="1">
    <location>
        <position position="1"/>
    </location>
</feature>
<feature type="chain" id="PRO_0000343450" description="Fascin">
    <location>
        <begin position="2"/>
        <end position="493"/>
    </location>
</feature>
<feature type="modified residue" description="N-acetylthreonine" evidence="1">
    <location>
        <position position="2"/>
    </location>
</feature>
<feature type="modified residue" description="Phosphoserine" evidence="1">
    <location>
        <position position="38"/>
    </location>
</feature>
<feature type="modified residue" description="Phosphoserine; by PKC" evidence="1">
    <location>
        <position position="39"/>
    </location>
</feature>
<feature type="modified residue" description="N6-acetyllysine" evidence="2">
    <location>
        <position position="74"/>
    </location>
</feature>
<feature type="modified residue" description="Phosphoserine" evidence="1">
    <location>
        <position position="127"/>
    </location>
</feature>
<feature type="modified residue" description="Phosphoserine" evidence="1">
    <location>
        <position position="234"/>
    </location>
</feature>
<feature type="modified residue" description="Phosphothreonine" evidence="1">
    <location>
        <position position="239"/>
    </location>
</feature>
<feature type="modified residue" description="Phosphothreonine" evidence="7">
    <location>
        <position position="403"/>
    </location>
</feature>
<feature type="cross-link" description="Glycyl lysine isopeptide (Lys-Gly) (interchain with G-Cter in SUMO2)" evidence="1">
    <location>
        <position position="399"/>
    </location>
</feature>
<evidence type="ECO:0000250" key="1">
    <source>
        <dbReference type="UniProtKB" id="Q16658"/>
    </source>
</evidence>
<evidence type="ECO:0000250" key="2">
    <source>
        <dbReference type="UniProtKB" id="Q61553"/>
    </source>
</evidence>
<evidence type="ECO:0000255" key="3"/>
<evidence type="ECO:0000269" key="4">
    <source>
    </source>
</evidence>
<evidence type="ECO:0000269" key="5">
    <source>
    </source>
</evidence>
<evidence type="ECO:0000269" key="6">
    <source>
    </source>
</evidence>
<evidence type="ECO:0007744" key="7">
    <source>
    </source>
</evidence>
<comment type="function">
    <text evidence="1 6">Actin-binding protein that contains 2 major actin binding sites (PubMed:8769857). Organizes filamentous actin into parallel bundles (PubMed:8769857). Plays a role in the organization of actin filament bundles and the formation of microspikes, membrane ruffles, and stress fibers. Important for the formation of a diverse set of cell protrusions, such as filopodia, and for cell motility and migration. Mediates reorganization of the actin cytoskeleton and axon growth cone collapse in response to NGF (By similarity).</text>
</comment>
<comment type="subunit">
    <text evidence="1 2 5">Interacts with RUFY3 (via N-terminus); the interaction induces neuron axon development (By similarity). Interacts with NGFR (PubMed:22155786). Associates with CTNNB1 (By similarity). Interacts with PLXNB3 (By similarity).</text>
</comment>
<comment type="subcellular location">
    <subcellularLocation>
        <location evidence="4">Cytoplasm</location>
        <location evidence="4">Cytosol</location>
    </subcellularLocation>
    <subcellularLocation>
        <location evidence="1">Cytoplasm</location>
        <location evidence="1">Cell cortex</location>
    </subcellularLocation>
    <subcellularLocation>
        <location evidence="1">Cytoplasm</location>
        <location evidence="1">Cytoskeleton</location>
    </subcellularLocation>
    <subcellularLocation>
        <location evidence="1">Cytoplasm</location>
        <location evidence="1">Cytoskeleton</location>
        <location evidence="1">Stress fiber</location>
    </subcellularLocation>
    <subcellularLocation>
        <location evidence="6">Cell projection</location>
        <location evidence="6">Growth cone</location>
    </subcellularLocation>
    <subcellularLocation>
        <location evidence="6">Cell projection</location>
        <location evidence="6">Filopodium</location>
    </subcellularLocation>
    <subcellularLocation>
        <location evidence="2">Cell projection</location>
        <location evidence="2">Invadopodium</location>
    </subcellularLocation>
    <subcellularLocation>
        <location evidence="1">Cell projection</location>
        <location evidence="1">Microvillus</location>
    </subcellularLocation>
    <subcellularLocation>
        <location evidence="1">Cell junction</location>
    </subcellularLocation>
    <text evidence="1 2">Colocalized with RUFY3 and F-actin at filipodia of the axonal growth cone. Colocalized with DBN1 and F-actin at the transitional domain of the axonal growth cone.</text>
</comment>
<comment type="tissue specificity">
    <text evidence="5 6">Detected in embryonic brain and brain from young rats (at protein level).</text>
</comment>
<comment type="domain">
    <text evidence="1">Composed of four fascin beta-trefoil domains.</text>
</comment>
<comment type="PTM">
    <text evidence="1">Phosphorylation at Ser-39 inhibits actin-binding. Phosphorylation is required for the reorganization of the actin cytoskeleton in response to NGF.</text>
</comment>
<comment type="similarity">
    <text evidence="3">Belongs to the fascin family.</text>
</comment>
<accession>P85845</accession>
<accession>B5DEI1</accession>
<gene>
    <name evidence="1" type="primary">Fscn1</name>
</gene>
<name>FSCN1_RAT</name>